<protein>
    <recommendedName>
        <fullName evidence="1">Translation initiation factor IF-1</fullName>
    </recommendedName>
</protein>
<dbReference type="EMBL" id="CR628336">
    <property type="protein sequence ID" value="CAH12886.1"/>
    <property type="molecule type" value="Genomic_DNA"/>
</dbReference>
<dbReference type="RefSeq" id="WP_010947496.1">
    <property type="nucleotide sequence ID" value="NC_006368.1"/>
</dbReference>
<dbReference type="SMR" id="Q5X4E2"/>
<dbReference type="GeneID" id="57035759"/>
<dbReference type="KEGG" id="lpp:lpp1734"/>
<dbReference type="LegioList" id="lpp1734"/>
<dbReference type="HOGENOM" id="CLU_151267_1_0_6"/>
<dbReference type="GO" id="GO:0005829">
    <property type="term" value="C:cytosol"/>
    <property type="evidence" value="ECO:0007669"/>
    <property type="project" value="TreeGrafter"/>
</dbReference>
<dbReference type="GO" id="GO:0043022">
    <property type="term" value="F:ribosome binding"/>
    <property type="evidence" value="ECO:0007669"/>
    <property type="project" value="UniProtKB-UniRule"/>
</dbReference>
<dbReference type="GO" id="GO:0019843">
    <property type="term" value="F:rRNA binding"/>
    <property type="evidence" value="ECO:0007669"/>
    <property type="project" value="UniProtKB-UniRule"/>
</dbReference>
<dbReference type="GO" id="GO:0003743">
    <property type="term" value="F:translation initiation factor activity"/>
    <property type="evidence" value="ECO:0007669"/>
    <property type="project" value="UniProtKB-UniRule"/>
</dbReference>
<dbReference type="CDD" id="cd04451">
    <property type="entry name" value="S1_IF1"/>
    <property type="match status" value="1"/>
</dbReference>
<dbReference type="FunFam" id="2.40.50.140:FF:000002">
    <property type="entry name" value="Translation initiation factor IF-1"/>
    <property type="match status" value="1"/>
</dbReference>
<dbReference type="Gene3D" id="2.40.50.140">
    <property type="entry name" value="Nucleic acid-binding proteins"/>
    <property type="match status" value="1"/>
</dbReference>
<dbReference type="HAMAP" id="MF_00075">
    <property type="entry name" value="IF_1"/>
    <property type="match status" value="1"/>
</dbReference>
<dbReference type="InterPro" id="IPR012340">
    <property type="entry name" value="NA-bd_OB-fold"/>
</dbReference>
<dbReference type="InterPro" id="IPR006196">
    <property type="entry name" value="RNA-binding_domain_S1_IF1"/>
</dbReference>
<dbReference type="InterPro" id="IPR003029">
    <property type="entry name" value="S1_domain"/>
</dbReference>
<dbReference type="InterPro" id="IPR004368">
    <property type="entry name" value="TIF_IF1"/>
</dbReference>
<dbReference type="NCBIfam" id="TIGR00008">
    <property type="entry name" value="infA"/>
    <property type="match status" value="1"/>
</dbReference>
<dbReference type="PANTHER" id="PTHR33370">
    <property type="entry name" value="TRANSLATION INITIATION FACTOR IF-1, CHLOROPLASTIC"/>
    <property type="match status" value="1"/>
</dbReference>
<dbReference type="PANTHER" id="PTHR33370:SF1">
    <property type="entry name" value="TRANSLATION INITIATION FACTOR IF-1, CHLOROPLASTIC"/>
    <property type="match status" value="1"/>
</dbReference>
<dbReference type="Pfam" id="PF01176">
    <property type="entry name" value="eIF-1a"/>
    <property type="match status" value="1"/>
</dbReference>
<dbReference type="SMART" id="SM00316">
    <property type="entry name" value="S1"/>
    <property type="match status" value="1"/>
</dbReference>
<dbReference type="SUPFAM" id="SSF50249">
    <property type="entry name" value="Nucleic acid-binding proteins"/>
    <property type="match status" value="1"/>
</dbReference>
<dbReference type="PROSITE" id="PS50832">
    <property type="entry name" value="S1_IF1_TYPE"/>
    <property type="match status" value="1"/>
</dbReference>
<organism>
    <name type="scientific">Legionella pneumophila (strain Paris)</name>
    <dbReference type="NCBI Taxonomy" id="297246"/>
    <lineage>
        <taxon>Bacteria</taxon>
        <taxon>Pseudomonadati</taxon>
        <taxon>Pseudomonadota</taxon>
        <taxon>Gammaproteobacteria</taxon>
        <taxon>Legionellales</taxon>
        <taxon>Legionellaceae</taxon>
        <taxon>Legionella</taxon>
    </lineage>
</organism>
<keyword id="KW-0963">Cytoplasm</keyword>
<keyword id="KW-0396">Initiation factor</keyword>
<keyword id="KW-0648">Protein biosynthesis</keyword>
<keyword id="KW-0694">RNA-binding</keyword>
<keyword id="KW-0699">rRNA-binding</keyword>
<gene>
    <name evidence="1" type="primary">infA</name>
    <name type="ordered locus">lpp1734</name>
</gene>
<accession>Q5X4E2</accession>
<comment type="function">
    <text evidence="1">One of the essential components for the initiation of protein synthesis. Stabilizes the binding of IF-2 and IF-3 on the 30S subunit to which N-formylmethionyl-tRNA(fMet) subsequently binds. Helps modulate mRNA selection, yielding the 30S pre-initiation complex (PIC). Upon addition of the 50S ribosomal subunit IF-1, IF-2 and IF-3 are released leaving the mature 70S translation initiation complex.</text>
</comment>
<comment type="subunit">
    <text evidence="1">Component of the 30S ribosomal translation pre-initiation complex which assembles on the 30S ribosome in the order IF-2 and IF-3, IF-1 and N-formylmethionyl-tRNA(fMet); mRNA recruitment can occur at any time during PIC assembly.</text>
</comment>
<comment type="subcellular location">
    <subcellularLocation>
        <location evidence="1">Cytoplasm</location>
    </subcellularLocation>
</comment>
<comment type="similarity">
    <text evidence="1">Belongs to the IF-1 family.</text>
</comment>
<name>IF1_LEGPA</name>
<sequence length="73" mass="8342">MAKEDHIEMAGTVIDTLPNTMFRVELENGHIVTAHISGRMRKNYIRILTGDKVKVELTPYDLSKGRIIFRDKG</sequence>
<evidence type="ECO:0000255" key="1">
    <source>
        <dbReference type="HAMAP-Rule" id="MF_00075"/>
    </source>
</evidence>
<proteinExistence type="inferred from homology"/>
<reference key="1">
    <citation type="journal article" date="2004" name="Nat. Genet.">
        <title>Evidence in the Legionella pneumophila genome for exploitation of host cell functions and high genome plasticity.</title>
        <authorList>
            <person name="Cazalet C."/>
            <person name="Rusniok C."/>
            <person name="Brueggemann H."/>
            <person name="Zidane N."/>
            <person name="Magnier A."/>
            <person name="Ma L."/>
            <person name="Tichit M."/>
            <person name="Jarraud S."/>
            <person name="Bouchier C."/>
            <person name="Vandenesch F."/>
            <person name="Kunst F."/>
            <person name="Etienne J."/>
            <person name="Glaser P."/>
            <person name="Buchrieser C."/>
        </authorList>
    </citation>
    <scope>NUCLEOTIDE SEQUENCE [LARGE SCALE GENOMIC DNA]</scope>
    <source>
        <strain>Paris</strain>
    </source>
</reference>
<feature type="chain" id="PRO_0000095807" description="Translation initiation factor IF-1">
    <location>
        <begin position="1"/>
        <end position="73"/>
    </location>
</feature>
<feature type="domain" description="S1-like" evidence="1">
    <location>
        <begin position="1"/>
        <end position="72"/>
    </location>
</feature>